<sequence length="432" mass="48240">MEFVVSNTNLRDLSRIFLNLSRIDDAVNWEINKDQLILTTLNSSRSGFGKVTLTKKFFDKFTFHPDTLFLTGFVSPTVRLSTQIKPILSIFRNKIFESTLLVNNNLNTNAGAAESSSKKNVVVENIQMQITSGKECRVIFKFNCKHGVVKTYKIAYEQTQTLHAVFDKASCHNNWQINSKILKDLIEHFGQKTEELTIQPVQGRVLLTSFTEEVVHNKDVLKQPTQTTVSIDGKEFEQVSLNEGIIITLSLKEFRAAVLLAESLGTSIASYYSVSGKPALFTFNKGKFMEIEAQFILATVMGPDDFDESSLGARWQQSGTANSSLLVPENTSAAPALENEAPSASIGWQTNGDAETSRMFHSTLDIPRNEEPAAKPSRQTTDEENHPLFLEGMPDETELMAFDNDVADDAEFGPTQHEQTYHGIFSQDDTET</sequence>
<comment type="function">
    <text>Acts in DNA repair and mutagenesis. Involved in promoting resistance to ionizing radiation and UV light, as well as regulating cell cycle progression after irradiation.</text>
</comment>
<comment type="similarity">
    <text evidence="2">Belongs to the rad9 family.</text>
</comment>
<name>RAD9_SCHOT</name>
<evidence type="ECO:0000256" key="1">
    <source>
        <dbReference type="SAM" id="MobiDB-lite"/>
    </source>
</evidence>
<evidence type="ECO:0000305" key="2"/>
<accession>P48013</accession>
<reference key="1">
    <citation type="journal article" date="1994" name="Gene">
        <title>Schizosaccharomyces malidevorans and Sz. octosporus homologues of Sz. pombe rad9, a gene that mediates radioresistance and cell-cycle progression.</title>
        <authorList>
            <person name="Lieberman H.B."/>
            <person name="Hopkins K.M."/>
        </authorList>
    </citation>
    <scope>NUCLEOTIDE SEQUENCE [MRNA]</scope>
</reference>
<keyword id="KW-0227">DNA damage</keyword>
<protein>
    <recommendedName>
        <fullName>DNA repair protein rad9</fullName>
    </recommendedName>
</protein>
<dbReference type="EMBL" id="X77277">
    <property type="protein sequence ID" value="CAA54492.1"/>
    <property type="molecule type" value="mRNA"/>
</dbReference>
<dbReference type="PIR" id="S41956">
    <property type="entry name" value="S41956"/>
</dbReference>
<dbReference type="SMR" id="P48013"/>
<dbReference type="VEuPathDB" id="FungiDB:SOCG_01543"/>
<dbReference type="OMA" id="NETQCRF"/>
<dbReference type="GO" id="GO:0030896">
    <property type="term" value="C:checkpoint clamp complex"/>
    <property type="evidence" value="ECO:0007669"/>
    <property type="project" value="EnsemblFungi"/>
</dbReference>
<dbReference type="GO" id="GO:0000785">
    <property type="term" value="C:chromatin"/>
    <property type="evidence" value="ECO:0007669"/>
    <property type="project" value="EnsemblFungi"/>
</dbReference>
<dbReference type="GO" id="GO:0140445">
    <property type="term" value="C:chromosome, telomeric repeat region"/>
    <property type="evidence" value="ECO:0007669"/>
    <property type="project" value="EnsemblFungi"/>
</dbReference>
<dbReference type="GO" id="GO:0005737">
    <property type="term" value="C:cytoplasm"/>
    <property type="evidence" value="ECO:0007669"/>
    <property type="project" value="EnsemblFungi"/>
</dbReference>
<dbReference type="GO" id="GO:0035861">
    <property type="term" value="C:site of double-strand break"/>
    <property type="evidence" value="ECO:0007669"/>
    <property type="project" value="EnsemblFungi"/>
</dbReference>
<dbReference type="GO" id="GO:0030295">
    <property type="term" value="F:protein kinase activator activity"/>
    <property type="evidence" value="ECO:0007669"/>
    <property type="project" value="EnsemblFungi"/>
</dbReference>
<dbReference type="GO" id="GO:0035591">
    <property type="term" value="F:signaling adaptor activity"/>
    <property type="evidence" value="ECO:0007669"/>
    <property type="project" value="EnsemblFungi"/>
</dbReference>
<dbReference type="GO" id="GO:0071479">
    <property type="term" value="P:cellular response to ionizing radiation"/>
    <property type="evidence" value="ECO:0007669"/>
    <property type="project" value="TreeGrafter"/>
</dbReference>
<dbReference type="GO" id="GO:0006281">
    <property type="term" value="P:DNA repair"/>
    <property type="evidence" value="ECO:0007669"/>
    <property type="project" value="InterPro"/>
</dbReference>
<dbReference type="GO" id="GO:0033314">
    <property type="term" value="P:mitotic DNA replication checkpoint signaling"/>
    <property type="evidence" value="ECO:0007669"/>
    <property type="project" value="EnsemblFungi"/>
</dbReference>
<dbReference type="GO" id="GO:0031573">
    <property type="term" value="P:mitotic intra-S DNA damage checkpoint signaling"/>
    <property type="evidence" value="ECO:0007669"/>
    <property type="project" value="EnsemblFungi"/>
</dbReference>
<dbReference type="GO" id="GO:0000723">
    <property type="term" value="P:telomere maintenance"/>
    <property type="evidence" value="ECO:0007669"/>
    <property type="project" value="EnsemblFungi"/>
</dbReference>
<dbReference type="Gene3D" id="3.70.10.10">
    <property type="match status" value="1"/>
</dbReference>
<dbReference type="InterPro" id="IPR046938">
    <property type="entry name" value="DNA_clamp_sf"/>
</dbReference>
<dbReference type="InterPro" id="IPR026584">
    <property type="entry name" value="Rad9"/>
</dbReference>
<dbReference type="InterPro" id="IPR007268">
    <property type="entry name" value="Rad9/Ddc1"/>
</dbReference>
<dbReference type="PANTHER" id="PTHR15237:SF0">
    <property type="entry name" value="CELL CYCLE CHECKPOINT CONTROL PROTEIN"/>
    <property type="match status" value="1"/>
</dbReference>
<dbReference type="PANTHER" id="PTHR15237">
    <property type="entry name" value="DNA REPAIR PROTEIN RAD9"/>
    <property type="match status" value="1"/>
</dbReference>
<dbReference type="Pfam" id="PF04139">
    <property type="entry name" value="Rad9"/>
    <property type="match status" value="1"/>
</dbReference>
<dbReference type="PIRSF" id="PIRSF009303">
    <property type="entry name" value="Cell_cycle_RAD9"/>
    <property type="match status" value="1"/>
</dbReference>
<dbReference type="SUPFAM" id="SSF55979">
    <property type="entry name" value="DNA clamp"/>
    <property type="match status" value="1"/>
</dbReference>
<gene>
    <name type="primary">rad9</name>
</gene>
<feature type="chain" id="PRO_0000097156" description="DNA repair protein rad9">
    <location>
        <begin position="1"/>
        <end position="432"/>
    </location>
</feature>
<feature type="region of interest" description="Disordered" evidence="1">
    <location>
        <begin position="363"/>
        <end position="389"/>
    </location>
</feature>
<feature type="region of interest" description="Disordered" evidence="1">
    <location>
        <begin position="409"/>
        <end position="432"/>
    </location>
</feature>
<proteinExistence type="evidence at transcript level"/>
<organism>
    <name type="scientific">Schizosaccharomyces octosporus</name>
    <name type="common">Fission yeast</name>
    <name type="synonym">Octosporomyces octosporus</name>
    <dbReference type="NCBI Taxonomy" id="4899"/>
    <lineage>
        <taxon>Eukaryota</taxon>
        <taxon>Fungi</taxon>
        <taxon>Dikarya</taxon>
        <taxon>Ascomycota</taxon>
        <taxon>Taphrinomycotina</taxon>
        <taxon>Schizosaccharomycetes</taxon>
        <taxon>Schizosaccharomycetales</taxon>
        <taxon>Schizosaccharomycetaceae</taxon>
        <taxon>Schizosaccharomyces</taxon>
    </lineage>
</organism>